<feature type="signal peptide" description="Tat-type signal" evidence="3">
    <location>
        <begin position="1"/>
        <end position="36"/>
    </location>
</feature>
<feature type="chain" id="PRO_0000012234" description="Glucan endo-1,3-beta-glucosidase">
    <location>
        <begin position="37"/>
        <end position="548"/>
    </location>
</feature>
<feature type="domain" description="GH64" evidence="4">
    <location>
        <begin position="38"/>
        <end position="396"/>
    </location>
</feature>
<feature type="domain" description="Ricin B-type lectin" evidence="2">
    <location>
        <begin position="422"/>
        <end position="548"/>
    </location>
</feature>
<feature type="active site" description="Proton donor" evidence="4">
    <location>
        <position position="153"/>
    </location>
</feature>
<feature type="active site" description="Proton acceptor" evidence="4">
    <location>
        <position position="169"/>
    </location>
</feature>
<reference key="1">
    <citation type="submission" date="1993-12" db="EMBL/GenBank/DDBJ databases">
        <authorList>
            <person name="Watanabe T."/>
            <person name="Hasegawa H."/>
            <person name="Tanaka H."/>
            <person name="Doi A."/>
            <person name="Doi K."/>
        </authorList>
    </citation>
    <scope>NUCLEOTIDE SEQUENCE [GENOMIC DNA]</scope>
</reference>
<organism>
    <name type="scientific">Arthrobacter sp. (strain YCWD3)</name>
    <dbReference type="NCBI Taxonomy" id="79671"/>
    <lineage>
        <taxon>Bacteria</taxon>
        <taxon>Bacillati</taxon>
        <taxon>Actinomycetota</taxon>
        <taxon>Actinomycetes</taxon>
        <taxon>Micrococcales</taxon>
        <taxon>Micrococcaceae</taxon>
        <taxon>Arthrobacter</taxon>
    </lineage>
</organism>
<name>E13B_ARTSW</name>
<keyword id="KW-0961">Cell wall biogenesis/degradation</keyword>
<keyword id="KW-0326">Glycosidase</keyword>
<keyword id="KW-0378">Hydrolase</keyword>
<keyword id="KW-0430">Lectin</keyword>
<keyword id="KW-0574">Periplasm</keyword>
<keyword id="KW-0732">Signal</keyword>
<evidence type="ECO:0000250" key="1"/>
<evidence type="ECO:0000255" key="2">
    <source>
        <dbReference type="PROSITE-ProRule" id="PRU00174"/>
    </source>
</evidence>
<evidence type="ECO:0000255" key="3">
    <source>
        <dbReference type="PROSITE-ProRule" id="PRU00648"/>
    </source>
</evidence>
<evidence type="ECO:0000255" key="4">
    <source>
        <dbReference type="PROSITE-ProRule" id="PRU01350"/>
    </source>
</evidence>
<evidence type="ECO:0000305" key="5"/>
<accession>Q59146</accession>
<sequence length="548" mass="58164">MPHDRKNSSRRAWAALCAAVLAVSGALVGVAAPASAVPATIPLTITNDSGRGPIYLYVLGERDGVAGWADAGGTFHPWPGGVGPVPVPAPDASIAGPGPGQSVTIRLPKLSGRVYYSYGQKMTFQIVLDGRLVQPAVQNDSDPNRNILFNWTEYTLNDGGLWINSTQVDHWSAPYQVGVQRADGQVLSTGMLKPNGYEAFYTALESAGWGGLVQRAPDGSRLRALNPSHGIDVGKISSASIDSYVTEVWNSYRTRDMCVTPFSHEPGTQFRGRVDGDWFRFRNGSGQEVAAFKKPDASSVYGCHKDLQAPNDHVVGPIARTLCAALVRTTALTNPNQPDANSAGFYQDARTNVYAKLAHQQMANGKAYAFAFDDVGAHESLVHDGNPQAAYIKLDPFTGTATPIANGGSTEQPGTPGGLPAGTGALRIGSTLCLDVPWADPTDTNQVQLATCSGNAAQQWTRGTDGTVRALGKCLDVARSGTADGTAVWIYTCNGTGAQKWTYDSATKALRNPQSGKCLDAQGGAPLRDGQKVQLWTCNQTEAQRWTL</sequence>
<dbReference type="EC" id="3.2.1.39"/>
<dbReference type="EMBL" id="D23668">
    <property type="protein sequence ID" value="BAA04892.1"/>
    <property type="molecule type" value="Genomic_DNA"/>
</dbReference>
<dbReference type="SMR" id="Q59146"/>
<dbReference type="CAZy" id="CBM13">
    <property type="family name" value="Carbohydrate-Binding Module Family 13"/>
</dbReference>
<dbReference type="CAZy" id="GH64">
    <property type="family name" value="Glycoside Hydrolase Family 64"/>
</dbReference>
<dbReference type="GO" id="GO:0042597">
    <property type="term" value="C:periplasmic space"/>
    <property type="evidence" value="ECO:0007669"/>
    <property type="project" value="UniProtKB-SubCell"/>
</dbReference>
<dbReference type="GO" id="GO:0030246">
    <property type="term" value="F:carbohydrate binding"/>
    <property type="evidence" value="ECO:0007669"/>
    <property type="project" value="UniProtKB-KW"/>
</dbReference>
<dbReference type="GO" id="GO:0042973">
    <property type="term" value="F:glucan endo-1,3-beta-D-glucosidase activity"/>
    <property type="evidence" value="ECO:0007669"/>
    <property type="project" value="UniProtKB-EC"/>
</dbReference>
<dbReference type="GO" id="GO:0071555">
    <property type="term" value="P:cell wall organization"/>
    <property type="evidence" value="ECO:0007669"/>
    <property type="project" value="UniProtKB-KW"/>
</dbReference>
<dbReference type="CDD" id="cd23451">
    <property type="entry name" value="beta-trefoil_Ricin_laminarinase"/>
    <property type="match status" value="1"/>
</dbReference>
<dbReference type="CDD" id="cd09216">
    <property type="entry name" value="GH64-LPHase-like"/>
    <property type="match status" value="1"/>
</dbReference>
<dbReference type="Gene3D" id="2.80.10.50">
    <property type="match status" value="2"/>
</dbReference>
<dbReference type="Gene3D" id="3.30.920.50">
    <property type="entry name" value="Beta-1,3-glucanase, C-terminal domain"/>
    <property type="match status" value="1"/>
</dbReference>
<dbReference type="Gene3D" id="2.60.110.10">
    <property type="entry name" value="Thaumatin"/>
    <property type="match status" value="1"/>
</dbReference>
<dbReference type="InterPro" id="IPR032477">
    <property type="entry name" value="Glyco_hydro_64"/>
</dbReference>
<dbReference type="InterPro" id="IPR037398">
    <property type="entry name" value="Glyco_hydro_64_fam"/>
</dbReference>
<dbReference type="InterPro" id="IPR042517">
    <property type="entry name" value="Glyco_hydro_64_N_2"/>
</dbReference>
<dbReference type="InterPro" id="IPR037176">
    <property type="entry name" value="Osmotin/thaumatin-like_sf"/>
</dbReference>
<dbReference type="InterPro" id="IPR035992">
    <property type="entry name" value="Ricin_B-like_lectins"/>
</dbReference>
<dbReference type="InterPro" id="IPR000772">
    <property type="entry name" value="Ricin_B_lectin"/>
</dbReference>
<dbReference type="InterPro" id="IPR006311">
    <property type="entry name" value="TAT_signal"/>
</dbReference>
<dbReference type="PANTHER" id="PTHR38165">
    <property type="match status" value="1"/>
</dbReference>
<dbReference type="PANTHER" id="PTHR38165:SF1">
    <property type="entry name" value="GLUCANASE B"/>
    <property type="match status" value="1"/>
</dbReference>
<dbReference type="Pfam" id="PF16483">
    <property type="entry name" value="Glyco_hydro_64"/>
    <property type="match status" value="1"/>
</dbReference>
<dbReference type="Pfam" id="PF00652">
    <property type="entry name" value="Ricin_B_lectin"/>
    <property type="match status" value="1"/>
</dbReference>
<dbReference type="SMART" id="SM00458">
    <property type="entry name" value="RICIN"/>
    <property type="match status" value="1"/>
</dbReference>
<dbReference type="SUPFAM" id="SSF50370">
    <property type="entry name" value="Ricin B-like lectins"/>
    <property type="match status" value="1"/>
</dbReference>
<dbReference type="PROSITE" id="PS52006">
    <property type="entry name" value="GH64"/>
    <property type="match status" value="1"/>
</dbReference>
<dbReference type="PROSITE" id="PS50231">
    <property type="entry name" value="RICIN_B_LECTIN"/>
    <property type="match status" value="1"/>
</dbReference>
<dbReference type="PROSITE" id="PS51318">
    <property type="entry name" value="TAT"/>
    <property type="match status" value="1"/>
</dbReference>
<proteinExistence type="inferred from homology"/>
<protein>
    <recommendedName>
        <fullName>Glucan endo-1,3-beta-glucosidase</fullName>
        <ecNumber>3.2.1.39</ecNumber>
    </recommendedName>
    <alternativeName>
        <fullName>(1-&gt;3)-beta-glucan endohydrolase</fullName>
        <shortName>(1-&gt;3)-beta-glucanase</shortName>
    </alternativeName>
</protein>
<comment type="function">
    <text evidence="1">Lysis of cellular walls containing beta-1,3-glucans. Implicated in the defense against fungal pathogens (By similarity).</text>
</comment>
<comment type="catalytic activity">
    <reaction>
        <text>Hydrolysis of (1-&gt;3)-beta-D-glucosidic linkages in (1-&gt;3)-beta-D-glucans.</text>
        <dbReference type="EC" id="3.2.1.39"/>
    </reaction>
</comment>
<comment type="subcellular location">
    <subcellularLocation>
        <location evidence="1">Periplasm</location>
    </subcellularLocation>
</comment>
<comment type="PTM">
    <text>Predicted to be exported by the Tat system. The position of the signal peptide cleavage has not been experimentally proven.</text>
</comment>
<comment type="similarity">
    <text evidence="4 5">Belongs to the glycosyl hydrolase 64 family.</text>
</comment>
<gene>
    <name type="primary">glcI</name>
</gene>